<accession>P80693</accession>
<feature type="chain" id="PRO_0000084552" description="Major exported protein">
    <location>
        <begin position="1"/>
        <end position="57" status="greater than"/>
    </location>
</feature>
<feature type="unsure residue">
    <location>
        <begin position="34"/>
        <end position="35"/>
    </location>
</feature>
<feature type="unsure residue">
    <location>
        <begin position="44"/>
        <end position="45"/>
    </location>
</feature>
<feature type="unsure residue">
    <location>
        <position position="47"/>
    </location>
</feature>
<feature type="unsure residue">
    <location>
        <begin position="50"/>
        <end position="54"/>
    </location>
</feature>
<feature type="unsure residue">
    <location>
        <position position="57"/>
    </location>
</feature>
<feature type="non-terminal residue">
    <location>
        <position position="57"/>
    </location>
</feature>
<evidence type="ECO:0000305" key="1"/>
<sequence>ATPAYMSITGTKQGLITAGAFTADSVGNTYQEGFEDQVMVQGFDPAVIIPTGPVYGQ</sequence>
<dbReference type="SMR" id="P80693"/>
<dbReference type="GO" id="GO:0005576">
    <property type="term" value="C:extracellular region"/>
    <property type="evidence" value="ECO:0007669"/>
    <property type="project" value="UniProtKB-SubCell"/>
</dbReference>
<dbReference type="Gene3D" id="2.30.110.20">
    <property type="entry name" value="Hcp1-like"/>
    <property type="match status" value="1"/>
</dbReference>
<dbReference type="InterPro" id="IPR036624">
    <property type="entry name" value="Hcp1-lik_sf"/>
</dbReference>
<dbReference type="InterPro" id="IPR008514">
    <property type="entry name" value="T6SS_Hcp"/>
</dbReference>
<dbReference type="NCBIfam" id="TIGR03344">
    <property type="entry name" value="VI_effect_Hcp1"/>
    <property type="match status" value="1"/>
</dbReference>
<dbReference type="SUPFAM" id="SSF141452">
    <property type="entry name" value="Hcp1-like"/>
    <property type="match status" value="1"/>
</dbReference>
<organism>
    <name type="scientific">Pseudomonas syringae pv. ribicola</name>
    <dbReference type="NCBI Taxonomy" id="55398"/>
    <lineage>
        <taxon>Bacteria</taxon>
        <taxon>Pseudomonadati</taxon>
        <taxon>Pseudomonadota</taxon>
        <taxon>Gammaproteobacteria</taxon>
        <taxon>Pseudomonadales</taxon>
        <taxon>Pseudomonadaceae</taxon>
        <taxon>Pseudomonas</taxon>
    </lineage>
</organism>
<protein>
    <recommendedName>
        <fullName>Major exported protein</fullName>
    </recommendedName>
</protein>
<reference key="1">
    <citation type="journal article" date="1998" name="Microbios">
        <title>Characterization of the phytopathogen Pseudomonas syringae pathovar ribicola NCPPB 963.</title>
        <authorList>
            <person name="Charnock C."/>
        </authorList>
    </citation>
    <scope>PROTEIN SEQUENCE</scope>
    <source>
        <strain>ATCC 13456 / LMG 2276 / NRRL B-859 / NCPPB 963</strain>
    </source>
</reference>
<proteinExistence type="evidence at protein level"/>
<name>MAJE_PSESI</name>
<comment type="subunit">
    <text evidence="1">Homodimer.</text>
</comment>
<comment type="subcellular location">
    <subcellularLocation>
        <location>Secreted</location>
    </subcellularLocation>
</comment>
<comment type="miscellaneous">
    <text>First appears in the mid-log phase. Present at highest concentration in the late-log early-stationary phase, before gradually diminishing. Significant amounts are still present after 30 hours.</text>
</comment>
<comment type="similarity">
    <text evidence="1">Belongs to the hcp1 family.</text>
</comment>
<keyword id="KW-0903">Direct protein sequencing</keyword>
<keyword id="KW-0964">Secreted</keyword>